<name>NUOK_XANOP</name>
<organism>
    <name type="scientific">Xanthomonas oryzae pv. oryzae (strain PXO99A)</name>
    <dbReference type="NCBI Taxonomy" id="360094"/>
    <lineage>
        <taxon>Bacteria</taxon>
        <taxon>Pseudomonadati</taxon>
        <taxon>Pseudomonadota</taxon>
        <taxon>Gammaproteobacteria</taxon>
        <taxon>Lysobacterales</taxon>
        <taxon>Lysobacteraceae</taxon>
        <taxon>Xanthomonas</taxon>
    </lineage>
</organism>
<sequence>MGHLLGLGAVLFCISLAGIFLNRKNVIVLLMSIELMLLSVNVNFIAFSRELGDTAGQLFVFFILTVAAAEAAIGLAILVTLFRTRRTINVAEVDTLKG</sequence>
<dbReference type="EC" id="7.1.1.-" evidence="1"/>
<dbReference type="EMBL" id="CP000967">
    <property type="protein sequence ID" value="ACD60083.1"/>
    <property type="molecule type" value="Genomic_DNA"/>
</dbReference>
<dbReference type="SMR" id="B2SVK9"/>
<dbReference type="KEGG" id="xop:PXO_01297"/>
<dbReference type="eggNOG" id="COG0713">
    <property type="taxonomic scope" value="Bacteria"/>
</dbReference>
<dbReference type="HOGENOM" id="CLU_144724_2_0_6"/>
<dbReference type="Proteomes" id="UP000001740">
    <property type="component" value="Chromosome"/>
</dbReference>
<dbReference type="GO" id="GO:0030964">
    <property type="term" value="C:NADH dehydrogenase complex"/>
    <property type="evidence" value="ECO:0007669"/>
    <property type="project" value="TreeGrafter"/>
</dbReference>
<dbReference type="GO" id="GO:0005886">
    <property type="term" value="C:plasma membrane"/>
    <property type="evidence" value="ECO:0007669"/>
    <property type="project" value="UniProtKB-SubCell"/>
</dbReference>
<dbReference type="GO" id="GO:0050136">
    <property type="term" value="F:NADH:ubiquinone reductase (non-electrogenic) activity"/>
    <property type="evidence" value="ECO:0007669"/>
    <property type="project" value="UniProtKB-UniRule"/>
</dbReference>
<dbReference type="GO" id="GO:0048038">
    <property type="term" value="F:quinone binding"/>
    <property type="evidence" value="ECO:0007669"/>
    <property type="project" value="UniProtKB-KW"/>
</dbReference>
<dbReference type="GO" id="GO:0042773">
    <property type="term" value="P:ATP synthesis coupled electron transport"/>
    <property type="evidence" value="ECO:0007669"/>
    <property type="project" value="InterPro"/>
</dbReference>
<dbReference type="FunFam" id="1.10.287.3510:FF:000001">
    <property type="entry name" value="NADH-quinone oxidoreductase subunit K"/>
    <property type="match status" value="1"/>
</dbReference>
<dbReference type="Gene3D" id="1.10.287.3510">
    <property type="match status" value="1"/>
</dbReference>
<dbReference type="HAMAP" id="MF_01456">
    <property type="entry name" value="NDH1_NuoK"/>
    <property type="match status" value="1"/>
</dbReference>
<dbReference type="InterPro" id="IPR001133">
    <property type="entry name" value="NADH_UbQ_OxRdtase_chain4L/K"/>
</dbReference>
<dbReference type="InterPro" id="IPR039428">
    <property type="entry name" value="NUOK/Mnh_C1-like"/>
</dbReference>
<dbReference type="NCBIfam" id="NF004320">
    <property type="entry name" value="PRK05715.1-2"/>
    <property type="match status" value="1"/>
</dbReference>
<dbReference type="NCBIfam" id="NF004321">
    <property type="entry name" value="PRK05715.1-3"/>
    <property type="match status" value="1"/>
</dbReference>
<dbReference type="NCBIfam" id="NF004323">
    <property type="entry name" value="PRK05715.1-5"/>
    <property type="match status" value="1"/>
</dbReference>
<dbReference type="PANTHER" id="PTHR11434:SF21">
    <property type="entry name" value="NADH DEHYDROGENASE SUBUNIT 4L-RELATED"/>
    <property type="match status" value="1"/>
</dbReference>
<dbReference type="PANTHER" id="PTHR11434">
    <property type="entry name" value="NADH-UBIQUINONE OXIDOREDUCTASE SUBUNIT ND4L"/>
    <property type="match status" value="1"/>
</dbReference>
<dbReference type="Pfam" id="PF00420">
    <property type="entry name" value="Oxidored_q2"/>
    <property type="match status" value="1"/>
</dbReference>
<proteinExistence type="inferred from homology"/>
<comment type="function">
    <text evidence="1">NDH-1 shuttles electrons from NADH, via FMN and iron-sulfur (Fe-S) centers, to quinones in the respiratory chain. The immediate electron acceptor for the enzyme in this species is believed to be ubiquinone. Couples the redox reaction to proton translocation (for every two electrons transferred, four hydrogen ions are translocated across the cytoplasmic membrane), and thus conserves the redox energy in a proton gradient.</text>
</comment>
<comment type="catalytic activity">
    <reaction evidence="1">
        <text>a quinone + NADH + 5 H(+)(in) = a quinol + NAD(+) + 4 H(+)(out)</text>
        <dbReference type="Rhea" id="RHEA:57888"/>
        <dbReference type="ChEBI" id="CHEBI:15378"/>
        <dbReference type="ChEBI" id="CHEBI:24646"/>
        <dbReference type="ChEBI" id="CHEBI:57540"/>
        <dbReference type="ChEBI" id="CHEBI:57945"/>
        <dbReference type="ChEBI" id="CHEBI:132124"/>
    </reaction>
</comment>
<comment type="subunit">
    <text evidence="1">NDH-1 is composed of 14 different subunits. Subunits NuoA, H, J, K, L, M, N constitute the membrane sector of the complex.</text>
</comment>
<comment type="subcellular location">
    <subcellularLocation>
        <location evidence="1">Cell inner membrane</location>
        <topology evidence="1">Multi-pass membrane protein</topology>
    </subcellularLocation>
</comment>
<comment type="similarity">
    <text evidence="1">Belongs to the complex I subunit 4L family.</text>
</comment>
<reference key="1">
    <citation type="journal article" date="2008" name="BMC Genomics">
        <title>Genome sequence and rapid evolution of the rice pathogen Xanthomonas oryzae pv. oryzae PXO99A.</title>
        <authorList>
            <person name="Salzberg S.L."/>
            <person name="Sommer D.D."/>
            <person name="Schatz M.C."/>
            <person name="Phillippy A.M."/>
            <person name="Rabinowicz P.D."/>
            <person name="Tsuge S."/>
            <person name="Furutani A."/>
            <person name="Ochiai H."/>
            <person name="Delcher A.L."/>
            <person name="Kelley D."/>
            <person name="Madupu R."/>
            <person name="Puiu D."/>
            <person name="Radune D."/>
            <person name="Shumway M."/>
            <person name="Trapnell C."/>
            <person name="Aparna G."/>
            <person name="Jha G."/>
            <person name="Pandey A."/>
            <person name="Patil P.B."/>
            <person name="Ishihara H."/>
            <person name="Meyer D.F."/>
            <person name="Szurek B."/>
            <person name="Verdier V."/>
            <person name="Koebnik R."/>
            <person name="Dow J.M."/>
            <person name="Ryan R.P."/>
            <person name="Hirata H."/>
            <person name="Tsuyumu S."/>
            <person name="Won Lee S."/>
            <person name="Seo Y.-S."/>
            <person name="Sriariyanum M."/>
            <person name="Ronald P.C."/>
            <person name="Sonti R.V."/>
            <person name="Van Sluys M.-A."/>
            <person name="Leach J.E."/>
            <person name="White F.F."/>
            <person name="Bogdanove A.J."/>
        </authorList>
    </citation>
    <scope>NUCLEOTIDE SEQUENCE [LARGE SCALE GENOMIC DNA]</scope>
    <source>
        <strain>PXO99A</strain>
    </source>
</reference>
<protein>
    <recommendedName>
        <fullName evidence="1">NADH-quinone oxidoreductase subunit K</fullName>
        <ecNumber evidence="1">7.1.1.-</ecNumber>
    </recommendedName>
    <alternativeName>
        <fullName evidence="1">NADH dehydrogenase I subunit K</fullName>
    </alternativeName>
    <alternativeName>
        <fullName evidence="1">NDH-1 subunit K</fullName>
    </alternativeName>
</protein>
<gene>
    <name evidence="1" type="primary">nuoK</name>
    <name type="ordered locus">PXO_01297</name>
</gene>
<evidence type="ECO:0000255" key="1">
    <source>
        <dbReference type="HAMAP-Rule" id="MF_01456"/>
    </source>
</evidence>
<feature type="chain" id="PRO_0000390279" description="NADH-quinone oxidoreductase subunit K">
    <location>
        <begin position="1"/>
        <end position="98"/>
    </location>
</feature>
<feature type="transmembrane region" description="Helical" evidence="1">
    <location>
        <begin position="1"/>
        <end position="21"/>
    </location>
</feature>
<feature type="transmembrane region" description="Helical" evidence="1">
    <location>
        <begin position="27"/>
        <end position="47"/>
    </location>
</feature>
<feature type="transmembrane region" description="Helical" evidence="1">
    <location>
        <begin position="59"/>
        <end position="79"/>
    </location>
</feature>
<keyword id="KW-0997">Cell inner membrane</keyword>
<keyword id="KW-1003">Cell membrane</keyword>
<keyword id="KW-0472">Membrane</keyword>
<keyword id="KW-0520">NAD</keyword>
<keyword id="KW-0874">Quinone</keyword>
<keyword id="KW-1278">Translocase</keyword>
<keyword id="KW-0812">Transmembrane</keyword>
<keyword id="KW-1133">Transmembrane helix</keyword>
<keyword id="KW-0813">Transport</keyword>
<keyword id="KW-0830">Ubiquinone</keyword>
<accession>B2SVK9</accession>